<feature type="initiator methionine" description="Removed" evidence="1">
    <location>
        <position position="1"/>
    </location>
</feature>
<feature type="chain" id="PRO_0000292953" description="Serine/threonine-protein kinase 38">
    <location>
        <begin position="2"/>
        <end position="465"/>
    </location>
</feature>
<feature type="domain" description="Protein kinase" evidence="3">
    <location>
        <begin position="89"/>
        <end position="382"/>
    </location>
</feature>
<feature type="domain" description="AGC-kinase C-terminal" evidence="4">
    <location>
        <begin position="383"/>
        <end position="455"/>
    </location>
</feature>
<feature type="region of interest" description="Interaction with S100B" evidence="1">
    <location>
        <begin position="62"/>
        <end position="87"/>
    </location>
</feature>
<feature type="short sequence motif" description="UFM1-interacting motif (UFIM)" evidence="1">
    <location>
        <begin position="306"/>
        <end position="311"/>
    </location>
</feature>
<feature type="active site" description="Proton acceptor" evidence="3 5">
    <location>
        <position position="212"/>
    </location>
</feature>
<feature type="binding site" evidence="3">
    <location>
        <begin position="95"/>
        <end position="103"/>
    </location>
    <ligand>
        <name>ATP</name>
        <dbReference type="ChEBI" id="CHEBI:30616"/>
    </ligand>
</feature>
<feature type="binding site" evidence="3">
    <location>
        <position position="118"/>
    </location>
    <ligand>
        <name>ATP</name>
        <dbReference type="ChEBI" id="CHEBI:30616"/>
    </ligand>
</feature>
<feature type="modified residue" description="N-acetylalanine" evidence="1">
    <location>
        <position position="2"/>
    </location>
</feature>
<feature type="modified residue" description="Phosphothreonine" evidence="1">
    <location>
        <position position="74"/>
    </location>
</feature>
<feature type="modified residue" description="Phosphoserine" evidence="1">
    <location>
        <position position="264"/>
    </location>
</feature>
<feature type="modified residue" description="Phosphoserine; by autocatalysis" evidence="1">
    <location>
        <position position="281"/>
    </location>
</feature>
<feature type="modified residue" description="Phosphothreonine; by STK24/MST3" evidence="1">
    <location>
        <position position="444"/>
    </location>
</feature>
<evidence type="ECO:0000250" key="1">
    <source>
        <dbReference type="UniProtKB" id="Q15208"/>
    </source>
</evidence>
<evidence type="ECO:0000250" key="2">
    <source>
        <dbReference type="UniProtKB" id="Q91VJ4"/>
    </source>
</evidence>
<evidence type="ECO:0000255" key="3">
    <source>
        <dbReference type="PROSITE-ProRule" id="PRU00159"/>
    </source>
</evidence>
<evidence type="ECO:0000255" key="4">
    <source>
        <dbReference type="PROSITE-ProRule" id="PRU00618"/>
    </source>
</evidence>
<evidence type="ECO:0000255" key="5">
    <source>
        <dbReference type="PROSITE-ProRule" id="PRU10027"/>
    </source>
</evidence>
<evidence type="ECO:0000305" key="6"/>
<sequence>MAMTGSTPCSSMSNHTKERVTMTKVTLENFYSNLIAQHEEREMRQKKLEKVMEEEGLKDEEKRLRRSAHARKETEFLRLKRTRLGLEDFESLKVIGRGAFGEVRLVQKKDTGHVYAMKILRKADMLEKEQVGHIRAERDILVEADSLWVVKMFYSFQDKLNLYLIMEFLPGGDMMTLLMKKDTLTEEETQFYIAETVLAIDSIHQLGFIHRDIKPDNLLLDSKGHVKLSDFGLCTGLKKAHRTEFYRNLNHSLPSDFTFQNMNSKRKAETWKRNRRQLAFSTVGTPDYIAPEVFMQTGYNKLCDWWSLGVIMYEMLIGYPPFCSETPQETYKKVMNWKETLTFPPEVPISEKAKDLILRFCCEWEHRIGAPGVEEIKSNSFFEGVDWEHIRERPAAISIEIKSIDDTSNFDEFPESDILKPTVATSNHPETDYKNKDWVFINYTYKRFEGLTARGAIPSYMKAAK</sequence>
<reference key="1">
    <citation type="submission" date="2004-11" db="EMBL/GenBank/DDBJ databases">
        <authorList>
            <consortium name="The German cDNA consortium"/>
        </authorList>
    </citation>
    <scope>NUCLEOTIDE SEQUENCE [LARGE SCALE MRNA]</scope>
    <source>
        <tissue>Kidney</tissue>
    </source>
</reference>
<accession>Q5R8M1</accession>
<proteinExistence type="evidence at transcript level"/>
<keyword id="KW-0007">Acetylation</keyword>
<keyword id="KW-0067">ATP-binding</keyword>
<keyword id="KW-0158">Chromosome</keyword>
<keyword id="KW-0963">Cytoplasm</keyword>
<keyword id="KW-0227">DNA damage</keyword>
<keyword id="KW-0418">Kinase</keyword>
<keyword id="KW-0460">Magnesium</keyword>
<keyword id="KW-0479">Metal-binding</keyword>
<keyword id="KW-0547">Nucleotide-binding</keyword>
<keyword id="KW-0539">Nucleus</keyword>
<keyword id="KW-0597">Phosphoprotein</keyword>
<keyword id="KW-1185">Reference proteome</keyword>
<keyword id="KW-0723">Serine/threonine-protein kinase</keyword>
<keyword id="KW-0808">Transferase</keyword>
<keyword id="KW-0832">Ubl conjugation</keyword>
<gene>
    <name type="primary">STK38</name>
</gene>
<organism>
    <name type="scientific">Pongo abelii</name>
    <name type="common">Sumatran orangutan</name>
    <name type="synonym">Pongo pygmaeus abelii</name>
    <dbReference type="NCBI Taxonomy" id="9601"/>
    <lineage>
        <taxon>Eukaryota</taxon>
        <taxon>Metazoa</taxon>
        <taxon>Chordata</taxon>
        <taxon>Craniata</taxon>
        <taxon>Vertebrata</taxon>
        <taxon>Euteleostomi</taxon>
        <taxon>Mammalia</taxon>
        <taxon>Eutheria</taxon>
        <taxon>Euarchontoglires</taxon>
        <taxon>Primates</taxon>
        <taxon>Haplorrhini</taxon>
        <taxon>Catarrhini</taxon>
        <taxon>Hominidae</taxon>
        <taxon>Pongo</taxon>
    </lineage>
</organism>
<name>STK38_PONAB</name>
<dbReference type="EC" id="2.7.11.1" evidence="1"/>
<dbReference type="EMBL" id="CR859730">
    <property type="protein sequence ID" value="CAH91889.1"/>
    <property type="molecule type" value="mRNA"/>
</dbReference>
<dbReference type="RefSeq" id="NP_001126095.1">
    <property type="nucleotide sequence ID" value="NM_001132623.1"/>
</dbReference>
<dbReference type="RefSeq" id="XP_009240039.1">
    <property type="nucleotide sequence ID" value="XM_009241764.4"/>
</dbReference>
<dbReference type="BMRB" id="Q5R8M1"/>
<dbReference type="SMR" id="Q5R8M1"/>
<dbReference type="FunCoup" id="Q5R8M1">
    <property type="interactions" value="4367"/>
</dbReference>
<dbReference type="STRING" id="9601.ENSPPYP00000018509"/>
<dbReference type="Ensembl" id="ENSPPYT00000019246.3">
    <property type="protein sequence ID" value="ENSPPYP00000018509.2"/>
    <property type="gene ID" value="ENSPPYG00000016547.3"/>
</dbReference>
<dbReference type="GeneID" id="100173048"/>
<dbReference type="KEGG" id="pon:100173048"/>
<dbReference type="CTD" id="11329"/>
<dbReference type="eggNOG" id="KOG0605">
    <property type="taxonomic scope" value="Eukaryota"/>
</dbReference>
<dbReference type="GeneTree" id="ENSGT00940000153544"/>
<dbReference type="HOGENOM" id="CLU_000288_67_0_1"/>
<dbReference type="InParanoid" id="Q5R8M1"/>
<dbReference type="OMA" id="MLVHHAL"/>
<dbReference type="OrthoDB" id="3638488at2759"/>
<dbReference type="TreeFam" id="TF105337"/>
<dbReference type="Proteomes" id="UP000001595">
    <property type="component" value="Chromosome 6"/>
</dbReference>
<dbReference type="GO" id="GO:0005737">
    <property type="term" value="C:cytoplasm"/>
    <property type="evidence" value="ECO:0000250"/>
    <property type="project" value="UniProtKB"/>
</dbReference>
<dbReference type="GO" id="GO:0005829">
    <property type="term" value="C:cytosol"/>
    <property type="evidence" value="ECO:0007669"/>
    <property type="project" value="Ensembl"/>
</dbReference>
<dbReference type="GO" id="GO:0005634">
    <property type="term" value="C:nucleus"/>
    <property type="evidence" value="ECO:0007669"/>
    <property type="project" value="UniProtKB-SubCell"/>
</dbReference>
<dbReference type="GO" id="GO:0035861">
    <property type="term" value="C:site of double-strand break"/>
    <property type="evidence" value="ECO:0000250"/>
    <property type="project" value="UniProtKB"/>
</dbReference>
<dbReference type="GO" id="GO:0005524">
    <property type="term" value="F:ATP binding"/>
    <property type="evidence" value="ECO:0007669"/>
    <property type="project" value="UniProtKB-KW"/>
</dbReference>
<dbReference type="GO" id="GO:0140566">
    <property type="term" value="F:histone reader activity"/>
    <property type="evidence" value="ECO:0000250"/>
    <property type="project" value="UniProtKB"/>
</dbReference>
<dbReference type="GO" id="GO:0000287">
    <property type="term" value="F:magnesium ion binding"/>
    <property type="evidence" value="ECO:0007669"/>
    <property type="project" value="Ensembl"/>
</dbReference>
<dbReference type="GO" id="GO:0031435">
    <property type="term" value="F:mitogen-activated protein kinase kinase kinase binding"/>
    <property type="evidence" value="ECO:0007669"/>
    <property type="project" value="Ensembl"/>
</dbReference>
<dbReference type="GO" id="GO:0106310">
    <property type="term" value="F:protein serine kinase activity"/>
    <property type="evidence" value="ECO:0007669"/>
    <property type="project" value="RHEA"/>
</dbReference>
<dbReference type="GO" id="GO:0004674">
    <property type="term" value="F:protein serine/threonine kinase activity"/>
    <property type="evidence" value="ECO:0007669"/>
    <property type="project" value="UniProtKB-KW"/>
</dbReference>
<dbReference type="GO" id="GO:0141185">
    <property type="term" value="F:UFM1-modified protein reader activity"/>
    <property type="evidence" value="ECO:0000250"/>
    <property type="project" value="UniProtKB"/>
</dbReference>
<dbReference type="GO" id="GO:0000077">
    <property type="term" value="P:DNA damage checkpoint signaling"/>
    <property type="evidence" value="ECO:0000250"/>
    <property type="project" value="UniProtKB"/>
</dbReference>
<dbReference type="GO" id="GO:0006974">
    <property type="term" value="P:DNA damage response"/>
    <property type="evidence" value="ECO:0000250"/>
    <property type="project" value="UniProtKB"/>
</dbReference>
<dbReference type="GO" id="GO:0043407">
    <property type="term" value="P:negative regulation of MAP kinase activity"/>
    <property type="evidence" value="ECO:0000250"/>
    <property type="project" value="UniProtKB"/>
</dbReference>
<dbReference type="GO" id="GO:0036211">
    <property type="term" value="P:protein modification process"/>
    <property type="evidence" value="ECO:0007669"/>
    <property type="project" value="Ensembl"/>
</dbReference>
<dbReference type="CDD" id="cd21782">
    <property type="entry name" value="MobB_NDR1"/>
    <property type="match status" value="1"/>
</dbReference>
<dbReference type="CDD" id="cd05628">
    <property type="entry name" value="STKc_NDR1"/>
    <property type="match status" value="1"/>
</dbReference>
<dbReference type="FunFam" id="1.10.510.10:FF:000057">
    <property type="entry name" value="Non-specific serine/threonine protein kinase"/>
    <property type="match status" value="1"/>
</dbReference>
<dbReference type="FunFam" id="1.10.510.10:FF:000086">
    <property type="entry name" value="Non-specific serine/threonine protein kinase"/>
    <property type="match status" value="1"/>
</dbReference>
<dbReference type="FunFam" id="3.30.200.20:FF:000118">
    <property type="entry name" value="Non-specific serine/threonine protein kinase"/>
    <property type="match status" value="1"/>
</dbReference>
<dbReference type="Gene3D" id="3.30.200.20">
    <property type="entry name" value="Phosphorylase Kinase, domain 1"/>
    <property type="match status" value="1"/>
</dbReference>
<dbReference type="Gene3D" id="1.10.510.10">
    <property type="entry name" value="Transferase(Phosphotransferase) domain 1"/>
    <property type="match status" value="2"/>
</dbReference>
<dbReference type="InterPro" id="IPR000961">
    <property type="entry name" value="AGC-kinase_C"/>
</dbReference>
<dbReference type="InterPro" id="IPR011009">
    <property type="entry name" value="Kinase-like_dom_sf"/>
</dbReference>
<dbReference type="InterPro" id="IPR017892">
    <property type="entry name" value="Pkinase_C"/>
</dbReference>
<dbReference type="InterPro" id="IPR000719">
    <property type="entry name" value="Prot_kinase_dom"/>
</dbReference>
<dbReference type="InterPro" id="IPR017441">
    <property type="entry name" value="Protein_kinase_ATP_BS"/>
</dbReference>
<dbReference type="InterPro" id="IPR050839">
    <property type="entry name" value="Rho-assoc_Ser/Thr_Kinase"/>
</dbReference>
<dbReference type="InterPro" id="IPR008271">
    <property type="entry name" value="Ser/Thr_kinase_AS"/>
</dbReference>
<dbReference type="PANTHER" id="PTHR22988:SF76">
    <property type="entry name" value="CHROMOSOME UNDETERMINED SCAFFOLD_135, WHOLE GENOME SHOTGUN SEQUENCE"/>
    <property type="match status" value="1"/>
</dbReference>
<dbReference type="PANTHER" id="PTHR22988">
    <property type="entry name" value="MYOTONIC DYSTROPHY S/T KINASE-RELATED"/>
    <property type="match status" value="1"/>
</dbReference>
<dbReference type="Pfam" id="PF00069">
    <property type="entry name" value="Pkinase"/>
    <property type="match status" value="1"/>
</dbReference>
<dbReference type="Pfam" id="PF00433">
    <property type="entry name" value="Pkinase_C"/>
    <property type="match status" value="1"/>
</dbReference>
<dbReference type="SMART" id="SM00133">
    <property type="entry name" value="S_TK_X"/>
    <property type="match status" value="1"/>
</dbReference>
<dbReference type="SMART" id="SM00220">
    <property type="entry name" value="S_TKc"/>
    <property type="match status" value="1"/>
</dbReference>
<dbReference type="SUPFAM" id="SSF56112">
    <property type="entry name" value="Protein kinase-like (PK-like)"/>
    <property type="match status" value="1"/>
</dbReference>
<dbReference type="PROSITE" id="PS51285">
    <property type="entry name" value="AGC_KINASE_CTER"/>
    <property type="match status" value="1"/>
</dbReference>
<dbReference type="PROSITE" id="PS00107">
    <property type="entry name" value="PROTEIN_KINASE_ATP"/>
    <property type="match status" value="1"/>
</dbReference>
<dbReference type="PROSITE" id="PS50011">
    <property type="entry name" value="PROTEIN_KINASE_DOM"/>
    <property type="match status" value="1"/>
</dbReference>
<dbReference type="PROSITE" id="PS00108">
    <property type="entry name" value="PROTEIN_KINASE_ST"/>
    <property type="match status" value="1"/>
</dbReference>
<comment type="function">
    <text evidence="1">Serine/threonine-protein kinase that acts as a negative regulator of MAP3K1/2 signaling. Converts MAP3K2 from its phosphorylated form to its non-phosphorylated form and inhibits autophosphorylation of MAP3K2. Acts as an ufmylation 'reader' in a kinase-independent manner: specifically recognizes and binds mono-ufmylated histone H4 in response to DNA damage, promoting the recruitment of SUV39H1 to the double-strand breaks, resulting in ATM activation.</text>
</comment>
<comment type="catalytic activity">
    <reaction evidence="1">
        <text>L-seryl-[protein] + ATP = O-phospho-L-seryl-[protein] + ADP + H(+)</text>
        <dbReference type="Rhea" id="RHEA:17989"/>
        <dbReference type="Rhea" id="RHEA-COMP:9863"/>
        <dbReference type="Rhea" id="RHEA-COMP:11604"/>
        <dbReference type="ChEBI" id="CHEBI:15378"/>
        <dbReference type="ChEBI" id="CHEBI:29999"/>
        <dbReference type="ChEBI" id="CHEBI:30616"/>
        <dbReference type="ChEBI" id="CHEBI:83421"/>
        <dbReference type="ChEBI" id="CHEBI:456216"/>
        <dbReference type="EC" id="2.7.11.1"/>
    </reaction>
</comment>
<comment type="catalytic activity">
    <reaction evidence="1">
        <text>L-threonyl-[protein] + ATP = O-phospho-L-threonyl-[protein] + ADP + H(+)</text>
        <dbReference type="Rhea" id="RHEA:46608"/>
        <dbReference type="Rhea" id="RHEA-COMP:11060"/>
        <dbReference type="Rhea" id="RHEA-COMP:11605"/>
        <dbReference type="ChEBI" id="CHEBI:15378"/>
        <dbReference type="ChEBI" id="CHEBI:30013"/>
        <dbReference type="ChEBI" id="CHEBI:30616"/>
        <dbReference type="ChEBI" id="CHEBI:61977"/>
        <dbReference type="ChEBI" id="CHEBI:456216"/>
        <dbReference type="EC" id="2.7.11.1"/>
    </reaction>
</comment>
<comment type="cofactor">
    <cofactor evidence="1">
        <name>Mg(2+)</name>
        <dbReference type="ChEBI" id="CHEBI:18420"/>
    </cofactor>
</comment>
<comment type="activity regulation">
    <text evidence="1">Activated by binding of S100B which releases autoinhibitory N-lobe interactions, enabling ATP to bind and the autophosphorylation of Ser-281. Thr-444 then undergoes calcium-dependent phosphorylation by STK24/MST3. Interactions between phosphorylated Thr-444 and the N-lobe promote additional structural changes that complete the activation of the kinase. Autoinhibition is also released by the binding of MOB1/MOBKL1A and MOB2/HCCA2 to the N-terminal of STK38 (By similarity).</text>
</comment>
<comment type="subunit">
    <text evidence="1 2">Homodimeric S100B binds two molecules of STK38. Interacts with MOB1 and MOB2. Interacts with MAP3K1 and MAP3K2 (via the kinase domain). Forms a tripartite complex with MOBKL1B and STK3/MST2. Interacts with MICAL1; leading to inhibit the protein kinase activity by antagonizing activation by MST1/STK4.</text>
</comment>
<comment type="subcellular location">
    <subcellularLocation>
        <location evidence="1">Nucleus</location>
    </subcellularLocation>
    <subcellularLocation>
        <location evidence="1">Cytoplasm</location>
    </subcellularLocation>
    <subcellularLocation>
        <location evidence="1">Chromosome</location>
    </subcellularLocation>
    <text evidence="1">Localizes to DNA double-strand breaks in response to DNA damage.</text>
</comment>
<comment type="domain">
    <text evidence="1">The UFM1-interacting motif (UFIM) specifically recognizes and binds ufmylated histone H4.</text>
</comment>
<comment type="PTM">
    <text evidence="1">ISGylated.</text>
</comment>
<comment type="PTM">
    <text evidence="1">Phosphorylated by STK3/MST2 and this is enhanced by MOBKL1B.</text>
</comment>
<comment type="similarity">
    <text evidence="6">Belongs to the protein kinase superfamily. AGC Ser/Thr protein kinase family.</text>
</comment>
<protein>
    <recommendedName>
        <fullName>Serine/threonine-protein kinase 38</fullName>
        <ecNumber evidence="1">2.7.11.1</ecNumber>
    </recommendedName>
</protein>